<proteinExistence type="inferred from homology"/>
<evidence type="ECO:0000255" key="1">
    <source>
        <dbReference type="HAMAP-Rule" id="MF_00036"/>
    </source>
</evidence>
<reference key="1">
    <citation type="journal article" date="2011" name="Stand. Genomic Sci.">
        <title>Complete genome sequence of Rhodospirillum rubrum type strain (S1).</title>
        <authorList>
            <person name="Munk A.C."/>
            <person name="Copeland A."/>
            <person name="Lucas S."/>
            <person name="Lapidus A."/>
            <person name="Del Rio T.G."/>
            <person name="Barry K."/>
            <person name="Detter J.C."/>
            <person name="Hammon N."/>
            <person name="Israni S."/>
            <person name="Pitluck S."/>
            <person name="Brettin T."/>
            <person name="Bruce D."/>
            <person name="Han C."/>
            <person name="Tapia R."/>
            <person name="Gilna P."/>
            <person name="Schmutz J."/>
            <person name="Larimer F."/>
            <person name="Land M."/>
            <person name="Kyrpides N.C."/>
            <person name="Mavromatis K."/>
            <person name="Richardson P."/>
            <person name="Rohde M."/>
            <person name="Goeker M."/>
            <person name="Klenk H.P."/>
            <person name="Zhang Y."/>
            <person name="Roberts G.P."/>
            <person name="Reslewic S."/>
            <person name="Schwartz D.C."/>
        </authorList>
    </citation>
    <scope>NUCLEOTIDE SEQUENCE [LARGE SCALE GENOMIC DNA]</scope>
    <source>
        <strain>ATCC 11170 / ATH 1.1.1 / DSM 467 / LMG 4362 / NCIMB 8255 / S1</strain>
    </source>
</reference>
<dbReference type="EC" id="6.1.1.7" evidence="1"/>
<dbReference type="EMBL" id="CP000230">
    <property type="protein sequence ID" value="ABC23615.1"/>
    <property type="molecule type" value="Genomic_DNA"/>
</dbReference>
<dbReference type="RefSeq" id="WP_011390445.1">
    <property type="nucleotide sequence ID" value="NC_007643.1"/>
</dbReference>
<dbReference type="RefSeq" id="YP_427902.1">
    <property type="nucleotide sequence ID" value="NC_007643.1"/>
</dbReference>
<dbReference type="SMR" id="Q2RQI0"/>
<dbReference type="STRING" id="269796.Rru_A2818"/>
<dbReference type="EnsemblBacteria" id="ABC23615">
    <property type="protein sequence ID" value="ABC23615"/>
    <property type="gene ID" value="Rru_A2818"/>
</dbReference>
<dbReference type="KEGG" id="rru:Rru_A2818"/>
<dbReference type="PATRIC" id="fig|269796.9.peg.2924"/>
<dbReference type="eggNOG" id="COG0013">
    <property type="taxonomic scope" value="Bacteria"/>
</dbReference>
<dbReference type="HOGENOM" id="CLU_004485_1_1_5"/>
<dbReference type="PhylomeDB" id="Q2RQI0"/>
<dbReference type="Proteomes" id="UP000001929">
    <property type="component" value="Chromosome"/>
</dbReference>
<dbReference type="GO" id="GO:0005829">
    <property type="term" value="C:cytosol"/>
    <property type="evidence" value="ECO:0007669"/>
    <property type="project" value="TreeGrafter"/>
</dbReference>
<dbReference type="GO" id="GO:0004813">
    <property type="term" value="F:alanine-tRNA ligase activity"/>
    <property type="evidence" value="ECO:0007669"/>
    <property type="project" value="UniProtKB-UniRule"/>
</dbReference>
<dbReference type="GO" id="GO:0002161">
    <property type="term" value="F:aminoacyl-tRNA deacylase activity"/>
    <property type="evidence" value="ECO:0007669"/>
    <property type="project" value="TreeGrafter"/>
</dbReference>
<dbReference type="GO" id="GO:0005524">
    <property type="term" value="F:ATP binding"/>
    <property type="evidence" value="ECO:0007669"/>
    <property type="project" value="UniProtKB-UniRule"/>
</dbReference>
<dbReference type="GO" id="GO:0000049">
    <property type="term" value="F:tRNA binding"/>
    <property type="evidence" value="ECO:0007669"/>
    <property type="project" value="UniProtKB-KW"/>
</dbReference>
<dbReference type="GO" id="GO:0008270">
    <property type="term" value="F:zinc ion binding"/>
    <property type="evidence" value="ECO:0007669"/>
    <property type="project" value="UniProtKB-UniRule"/>
</dbReference>
<dbReference type="GO" id="GO:0006419">
    <property type="term" value="P:alanyl-tRNA aminoacylation"/>
    <property type="evidence" value="ECO:0007669"/>
    <property type="project" value="UniProtKB-UniRule"/>
</dbReference>
<dbReference type="GO" id="GO:0045892">
    <property type="term" value="P:negative regulation of DNA-templated transcription"/>
    <property type="evidence" value="ECO:0007669"/>
    <property type="project" value="TreeGrafter"/>
</dbReference>
<dbReference type="CDD" id="cd00673">
    <property type="entry name" value="AlaRS_core"/>
    <property type="match status" value="1"/>
</dbReference>
<dbReference type="FunFam" id="3.10.310.40:FF:000001">
    <property type="entry name" value="Alanine--tRNA ligase"/>
    <property type="match status" value="1"/>
</dbReference>
<dbReference type="FunFam" id="3.30.54.20:FF:000001">
    <property type="entry name" value="Alanine--tRNA ligase"/>
    <property type="match status" value="1"/>
</dbReference>
<dbReference type="FunFam" id="3.30.930.10:FF:000004">
    <property type="entry name" value="Alanine--tRNA ligase"/>
    <property type="match status" value="1"/>
</dbReference>
<dbReference type="FunFam" id="3.30.980.10:FF:000004">
    <property type="entry name" value="Alanine--tRNA ligase, cytoplasmic"/>
    <property type="match status" value="1"/>
</dbReference>
<dbReference type="Gene3D" id="2.40.30.130">
    <property type="match status" value="1"/>
</dbReference>
<dbReference type="Gene3D" id="3.10.310.40">
    <property type="match status" value="1"/>
</dbReference>
<dbReference type="Gene3D" id="3.30.54.20">
    <property type="match status" value="1"/>
</dbReference>
<dbReference type="Gene3D" id="6.10.250.550">
    <property type="match status" value="1"/>
</dbReference>
<dbReference type="Gene3D" id="3.30.930.10">
    <property type="entry name" value="Bira Bifunctional Protein, Domain 2"/>
    <property type="match status" value="1"/>
</dbReference>
<dbReference type="Gene3D" id="3.30.980.10">
    <property type="entry name" value="Threonyl-trna Synthetase, Chain A, domain 2"/>
    <property type="match status" value="1"/>
</dbReference>
<dbReference type="HAMAP" id="MF_00036_B">
    <property type="entry name" value="Ala_tRNA_synth_B"/>
    <property type="match status" value="1"/>
</dbReference>
<dbReference type="InterPro" id="IPR045864">
    <property type="entry name" value="aa-tRNA-synth_II/BPL/LPL"/>
</dbReference>
<dbReference type="InterPro" id="IPR002318">
    <property type="entry name" value="Ala-tRNA-lgiase_IIc"/>
</dbReference>
<dbReference type="InterPro" id="IPR018162">
    <property type="entry name" value="Ala-tRNA-ligase_IIc_anticod-bd"/>
</dbReference>
<dbReference type="InterPro" id="IPR018165">
    <property type="entry name" value="Ala-tRNA-synth_IIc_core"/>
</dbReference>
<dbReference type="InterPro" id="IPR018164">
    <property type="entry name" value="Ala-tRNA-synth_IIc_N"/>
</dbReference>
<dbReference type="InterPro" id="IPR050058">
    <property type="entry name" value="Ala-tRNA_ligase"/>
</dbReference>
<dbReference type="InterPro" id="IPR023033">
    <property type="entry name" value="Ala_tRNA_ligase_euk/bac"/>
</dbReference>
<dbReference type="InterPro" id="IPR003156">
    <property type="entry name" value="DHHA1_dom"/>
</dbReference>
<dbReference type="InterPro" id="IPR018163">
    <property type="entry name" value="Thr/Ala-tRNA-synth_IIc_edit"/>
</dbReference>
<dbReference type="InterPro" id="IPR009000">
    <property type="entry name" value="Transl_B-barrel_sf"/>
</dbReference>
<dbReference type="InterPro" id="IPR012947">
    <property type="entry name" value="tRNA_SAD"/>
</dbReference>
<dbReference type="NCBIfam" id="TIGR00344">
    <property type="entry name" value="alaS"/>
    <property type="match status" value="1"/>
</dbReference>
<dbReference type="PANTHER" id="PTHR11777:SF9">
    <property type="entry name" value="ALANINE--TRNA LIGASE, CYTOPLASMIC"/>
    <property type="match status" value="1"/>
</dbReference>
<dbReference type="PANTHER" id="PTHR11777">
    <property type="entry name" value="ALANYL-TRNA SYNTHETASE"/>
    <property type="match status" value="1"/>
</dbReference>
<dbReference type="Pfam" id="PF02272">
    <property type="entry name" value="DHHA1"/>
    <property type="match status" value="1"/>
</dbReference>
<dbReference type="Pfam" id="PF01411">
    <property type="entry name" value="tRNA-synt_2c"/>
    <property type="match status" value="1"/>
</dbReference>
<dbReference type="Pfam" id="PF07973">
    <property type="entry name" value="tRNA_SAD"/>
    <property type="match status" value="1"/>
</dbReference>
<dbReference type="PRINTS" id="PR00980">
    <property type="entry name" value="TRNASYNTHALA"/>
</dbReference>
<dbReference type="SMART" id="SM00863">
    <property type="entry name" value="tRNA_SAD"/>
    <property type="match status" value="1"/>
</dbReference>
<dbReference type="SUPFAM" id="SSF55681">
    <property type="entry name" value="Class II aaRS and biotin synthetases"/>
    <property type="match status" value="1"/>
</dbReference>
<dbReference type="SUPFAM" id="SSF101353">
    <property type="entry name" value="Putative anticodon-binding domain of alanyl-tRNA synthetase (AlaRS)"/>
    <property type="match status" value="1"/>
</dbReference>
<dbReference type="SUPFAM" id="SSF55186">
    <property type="entry name" value="ThrRS/AlaRS common domain"/>
    <property type="match status" value="1"/>
</dbReference>
<dbReference type="SUPFAM" id="SSF50447">
    <property type="entry name" value="Translation proteins"/>
    <property type="match status" value="1"/>
</dbReference>
<dbReference type="PROSITE" id="PS50860">
    <property type="entry name" value="AA_TRNA_LIGASE_II_ALA"/>
    <property type="match status" value="1"/>
</dbReference>
<sequence length="883" mass="95108">MSTTSEIRRTFLDFFVKNGHQEVASSPLVPLNDPTLMFTNAGMVQFKNVFTGAETRPYHRATTSQKCVRAGGKHNDLDNVGYTARHHTFFEMLGNFSFGDYFKEQAIDFAWRLITEEYALPKDRLLVTVHTSDEDAAGLWRKVAGLPDERIIRIPTNDNFWAMGDTGPCGPCSEIFFDHGPKVAGGPPGSADENGDRFIEIWNLVFMQFEQLTVDQRVALPRPSIDTGMGLERVAAVLQGKHDNYDIDLMRALIEAIASAAGTDPDGPHKVSHRVIADHLRSACFLIADGVLPSNEGRGYVLRRIMRRAMRHAHMMGCVDPLMFKLVPALNREMADQFPELNRANALITETLKLEETRFKQMLDRGLKLLAEETGDLASGDSLPGPVAFKLYDTYGFPLDLTQDALRPRGIGVDTAGFDAAMARQREDARKSWTGSGDHATEAVWFDIRDRVGASEFLGYTSTDAEGAIVALVVDGKVVESAPADTEVAVIANQTPFYGESGGQMGDAGEIRLAEGGKVVVRDTAKKLGALHVHIGRVEGATIRVGQAARFVVDTERRDALRSHHSATHLLHEALRRRLGEHVTQKGSLVAPDRLRFDISHPKPLSAAEIRVVEDDVNREIRANAEITTQIMDPDSAIEAGAMALFGEKYGEEVRVVSMGRREPGANRPFSVELCGGTHARRTGDIGFFKIIGEGAVASGVRRIEAVTGQAAFEHIEAQDDLVSGAAQLLKVTPADLPGRIQALLDDRRRLERDLADARRKLATGGGGAAAPAVVEINGVKWVGRLLEDVPAKDLKGMVDEVKKQLGSGVVALIAVADGKASLVVGVTEDLVGRFDAVALVRAGAGAIGGKGGGGRPDMAQAGGPDGAQAGAALAAIEAALAG</sequence>
<accession>Q2RQI0</accession>
<organism>
    <name type="scientific">Rhodospirillum rubrum (strain ATCC 11170 / ATH 1.1.1 / DSM 467 / LMG 4362 / NCIMB 8255 / S1)</name>
    <dbReference type="NCBI Taxonomy" id="269796"/>
    <lineage>
        <taxon>Bacteria</taxon>
        <taxon>Pseudomonadati</taxon>
        <taxon>Pseudomonadota</taxon>
        <taxon>Alphaproteobacteria</taxon>
        <taxon>Rhodospirillales</taxon>
        <taxon>Rhodospirillaceae</taxon>
        <taxon>Rhodospirillum</taxon>
    </lineage>
</organism>
<keyword id="KW-0030">Aminoacyl-tRNA synthetase</keyword>
<keyword id="KW-0067">ATP-binding</keyword>
<keyword id="KW-0963">Cytoplasm</keyword>
<keyword id="KW-0436">Ligase</keyword>
<keyword id="KW-0479">Metal-binding</keyword>
<keyword id="KW-0547">Nucleotide-binding</keyword>
<keyword id="KW-0648">Protein biosynthesis</keyword>
<keyword id="KW-1185">Reference proteome</keyword>
<keyword id="KW-0694">RNA-binding</keyword>
<keyword id="KW-0820">tRNA-binding</keyword>
<keyword id="KW-0862">Zinc</keyword>
<comment type="function">
    <text evidence="1">Catalyzes the attachment of alanine to tRNA(Ala) in a two-step reaction: alanine is first activated by ATP to form Ala-AMP and then transferred to the acceptor end of tRNA(Ala). Also edits incorrectly charged Ser-tRNA(Ala) and Gly-tRNA(Ala) via its editing domain.</text>
</comment>
<comment type="catalytic activity">
    <reaction evidence="1">
        <text>tRNA(Ala) + L-alanine + ATP = L-alanyl-tRNA(Ala) + AMP + diphosphate</text>
        <dbReference type="Rhea" id="RHEA:12540"/>
        <dbReference type="Rhea" id="RHEA-COMP:9657"/>
        <dbReference type="Rhea" id="RHEA-COMP:9923"/>
        <dbReference type="ChEBI" id="CHEBI:30616"/>
        <dbReference type="ChEBI" id="CHEBI:33019"/>
        <dbReference type="ChEBI" id="CHEBI:57972"/>
        <dbReference type="ChEBI" id="CHEBI:78442"/>
        <dbReference type="ChEBI" id="CHEBI:78497"/>
        <dbReference type="ChEBI" id="CHEBI:456215"/>
        <dbReference type="EC" id="6.1.1.7"/>
    </reaction>
</comment>
<comment type="cofactor">
    <cofactor evidence="1">
        <name>Zn(2+)</name>
        <dbReference type="ChEBI" id="CHEBI:29105"/>
    </cofactor>
    <text evidence="1">Binds 1 zinc ion per subunit.</text>
</comment>
<comment type="subcellular location">
    <subcellularLocation>
        <location evidence="1">Cytoplasm</location>
    </subcellularLocation>
</comment>
<comment type="domain">
    <text evidence="1">Consists of three domains; the N-terminal catalytic domain, the editing domain and the C-terminal C-Ala domain. The editing domain removes incorrectly charged amino acids, while the C-Ala domain, along with tRNA(Ala), serves as a bridge to cooperatively bring together the editing and aminoacylation centers thus stimulating deacylation of misacylated tRNAs.</text>
</comment>
<comment type="similarity">
    <text evidence="1">Belongs to the class-II aminoacyl-tRNA synthetase family.</text>
</comment>
<name>SYA_RHORT</name>
<gene>
    <name evidence="1" type="primary">alaS</name>
    <name type="ordered locus">Rru_A2818</name>
</gene>
<feature type="chain" id="PRO_0000347761" description="Alanine--tRNA ligase">
    <location>
        <begin position="1"/>
        <end position="883"/>
    </location>
</feature>
<feature type="binding site" evidence="1">
    <location>
        <position position="565"/>
    </location>
    <ligand>
        <name>Zn(2+)</name>
        <dbReference type="ChEBI" id="CHEBI:29105"/>
    </ligand>
</feature>
<feature type="binding site" evidence="1">
    <location>
        <position position="569"/>
    </location>
    <ligand>
        <name>Zn(2+)</name>
        <dbReference type="ChEBI" id="CHEBI:29105"/>
    </ligand>
</feature>
<feature type="binding site" evidence="1">
    <location>
        <position position="675"/>
    </location>
    <ligand>
        <name>Zn(2+)</name>
        <dbReference type="ChEBI" id="CHEBI:29105"/>
    </ligand>
</feature>
<feature type="binding site" evidence="1">
    <location>
        <position position="679"/>
    </location>
    <ligand>
        <name>Zn(2+)</name>
        <dbReference type="ChEBI" id="CHEBI:29105"/>
    </ligand>
</feature>
<protein>
    <recommendedName>
        <fullName evidence="1">Alanine--tRNA ligase</fullName>
        <ecNumber evidence="1">6.1.1.7</ecNumber>
    </recommendedName>
    <alternativeName>
        <fullName evidence="1">Alanyl-tRNA synthetase</fullName>
        <shortName evidence="1">AlaRS</shortName>
    </alternativeName>
</protein>